<name>3BHS3_MOUSE</name>
<evidence type="ECO:0000250" key="1"/>
<evidence type="ECO:0000255" key="2"/>
<evidence type="ECO:0000305" key="3"/>
<accession>P26150</accession>
<sequence length="373" mass="42031">MPGWSCLVTGAGGFLGQRIIQLLVQEKDLEEIRVLDKVFKPETREQFFNLGTSIKVTVLEGDILDTQYLRRACQGISVVIHTAAIIDVTGVIPRQTILDVNLKGTQNLLEACIQASVPAFIFSSSVDVAGPNSYKDIVLNGHEDEHRESTWSDPYPYSKKMAEKAVLAANGSMLKNGGTLQTCALRPMCIYGERSQFLSNTIIKALKNKFILRGGGKFSTANPVYVGNVAWAHILAARGLRNPKKSPNIQGEFYYISDDTPHQSYDDLNYTLSKEWGFCLNSRWYLPVPILYWLAFLLETVSFLLSPIYRYIPPFNRHLVTLTASTFTFSYKKAQRDLGYEPLVSWEEAKQKTSEWIGTLVEQHRETLDTKSQ</sequence>
<protein>
    <recommendedName>
        <fullName>3 beta-hydroxysteroid dehydrogenase/Delta 5--&gt;4-isomerase type 3</fullName>
    </recommendedName>
    <alternativeName>
        <fullName>3 beta-hydroxysteroid dehydrogenase/Delta 5--&gt;4-isomerase type III</fullName>
        <shortName>3-beta-HSD III</shortName>
    </alternativeName>
    <domain>
        <recommendedName>
            <fullName>3-beta-hydroxy-Delta(5)-steroid dehydrogenase</fullName>
            <ecNumber>1.1.1.145</ecNumber>
        </recommendedName>
        <alternativeName>
            <fullName>3-beta-hydroxy-5-ene steroid dehydrogenase</fullName>
        </alternativeName>
        <alternativeName>
            <fullName>Progesterone reductase</fullName>
        </alternativeName>
    </domain>
    <domain>
        <recommendedName>
            <fullName>Steroid Delta-isomerase</fullName>
            <ecNumber>5.3.3.1</ecNumber>
        </recommendedName>
        <alternativeName>
            <fullName>Delta-5-3-ketosteroid isomerase</fullName>
        </alternativeName>
    </domain>
</protein>
<proteinExistence type="evidence at protein level"/>
<organism>
    <name type="scientific">Mus musculus</name>
    <name type="common">Mouse</name>
    <dbReference type="NCBI Taxonomy" id="10090"/>
    <lineage>
        <taxon>Eukaryota</taxon>
        <taxon>Metazoa</taxon>
        <taxon>Chordata</taxon>
        <taxon>Craniata</taxon>
        <taxon>Vertebrata</taxon>
        <taxon>Euteleostomi</taxon>
        <taxon>Mammalia</taxon>
        <taxon>Eutheria</taxon>
        <taxon>Euarchontoglires</taxon>
        <taxon>Glires</taxon>
        <taxon>Rodentia</taxon>
        <taxon>Myomorpha</taxon>
        <taxon>Muroidea</taxon>
        <taxon>Muridae</taxon>
        <taxon>Murinae</taxon>
        <taxon>Mus</taxon>
        <taxon>Mus</taxon>
    </lineage>
</organism>
<feature type="chain" id="PRO_0000087782" description="3 beta-hydroxysteroid dehydrogenase/Delta 5--&gt;4-isomerase type 3">
    <location>
        <begin position="1"/>
        <end position="373"/>
    </location>
</feature>
<feature type="transmembrane region" description="Helical" evidence="2">
    <location>
        <begin position="288"/>
        <end position="308"/>
    </location>
</feature>
<feature type="active site" description="Proton acceptor" evidence="1">
    <location>
        <position position="155"/>
    </location>
</feature>
<feature type="binding site" evidence="1">
    <location>
        <position position="159"/>
    </location>
    <ligand>
        <name>NAD(+)</name>
        <dbReference type="ChEBI" id="CHEBI:57540"/>
    </ligand>
</feature>
<comment type="function">
    <text>3-beta-HSD is a bifunctional enzyme, that catalyzes the oxidative conversion of Delta(5)-ene-3-beta-hydroxy steroid, and the oxidative conversion of ketosteroids. The 3-beta-HSD enzymatic system plays a crucial role in the biosynthesis of all classes of hormonal steroids.</text>
</comment>
<comment type="catalytic activity">
    <reaction>
        <text>a 3beta-hydroxy-Delta(5)-steroid + NAD(+) = a 3-oxo-Delta(5)-steroid + NADH + H(+)</text>
        <dbReference type="Rhea" id="RHEA:24076"/>
        <dbReference type="ChEBI" id="CHEBI:1722"/>
        <dbReference type="ChEBI" id="CHEBI:15378"/>
        <dbReference type="ChEBI" id="CHEBI:47907"/>
        <dbReference type="ChEBI" id="CHEBI:57540"/>
        <dbReference type="ChEBI" id="CHEBI:57945"/>
        <dbReference type="EC" id="1.1.1.145"/>
    </reaction>
</comment>
<comment type="catalytic activity">
    <reaction>
        <text>a 3-oxo-Delta(5)-steroid = a 3-oxo-Delta(4)-steroid</text>
        <dbReference type="Rhea" id="RHEA:14709"/>
        <dbReference type="ChEBI" id="CHEBI:47907"/>
        <dbReference type="ChEBI" id="CHEBI:47909"/>
        <dbReference type="EC" id="5.3.3.1"/>
    </reaction>
</comment>
<comment type="pathway">
    <text>Lipid metabolism; steroid biosynthesis.</text>
</comment>
<comment type="subcellular location">
    <subcellularLocation>
        <location>Endoplasmic reticulum membrane</location>
        <topology>Single-pass membrane protein</topology>
    </subcellularLocation>
    <subcellularLocation>
        <location>Mitochondrion membrane</location>
        <topology>Single-pass membrane protein</topology>
    </subcellularLocation>
</comment>
<comment type="tissue specificity">
    <text>Liver and kidney. Greater expression in liver.</text>
</comment>
<comment type="similarity">
    <text evidence="3">Belongs to the 3-beta-HSD family.</text>
</comment>
<reference key="1">
    <citation type="journal article" date="1991" name="Proc. Natl. Acad. Sci. U.S.A.">
        <title>Multiple forms of mouse 3 beta-hydroxysteroid dehydrogenase/delta 5-delta 4 isomerase and differential expression in gonads, adrenal glands, liver, and kidneys of both sexes.</title>
        <authorList>
            <person name="Bain P.A."/>
            <person name="Yoo M."/>
            <person name="Clarke T."/>
            <person name="Hammond S.H."/>
            <person name="Payne A.H."/>
        </authorList>
    </citation>
    <scope>NUCLEOTIDE SEQUENCE [MRNA]</scope>
    <source>
        <strain>BALB/cJ</strain>
    </source>
</reference>
<reference key="2">
    <citation type="journal article" date="2010" name="Cell">
        <title>A tissue-specific atlas of mouse protein phosphorylation and expression.</title>
        <authorList>
            <person name="Huttlin E.L."/>
            <person name="Jedrychowski M.P."/>
            <person name="Elias J.E."/>
            <person name="Goswami T."/>
            <person name="Rad R."/>
            <person name="Beausoleil S.A."/>
            <person name="Villen J."/>
            <person name="Haas W."/>
            <person name="Sowa M.E."/>
            <person name="Gygi S.P."/>
        </authorList>
    </citation>
    <scope>IDENTIFICATION BY MASS SPECTROMETRY [LARGE SCALE ANALYSIS]</scope>
    <source>
        <tissue>Liver</tissue>
    </source>
</reference>
<keyword id="KW-0256">Endoplasmic reticulum</keyword>
<keyword id="KW-0413">Isomerase</keyword>
<keyword id="KW-0472">Membrane</keyword>
<keyword id="KW-0496">Mitochondrion</keyword>
<keyword id="KW-0511">Multifunctional enzyme</keyword>
<keyword id="KW-0520">NAD</keyword>
<keyword id="KW-0560">Oxidoreductase</keyword>
<keyword id="KW-1185">Reference proteome</keyword>
<keyword id="KW-0755">Steroidogenesis</keyword>
<keyword id="KW-0812">Transmembrane</keyword>
<keyword id="KW-1133">Transmembrane helix</keyword>
<dbReference type="EC" id="1.1.1.145"/>
<dbReference type="EC" id="5.3.3.1"/>
<dbReference type="EMBL" id="M77015">
    <property type="status" value="NOT_ANNOTATED_CDS"/>
    <property type="molecule type" value="mRNA"/>
</dbReference>
<dbReference type="CCDS" id="CCDS51016.1"/>
<dbReference type="RefSeq" id="NP_001155214.1">
    <property type="nucleotide sequence ID" value="NM_001161742.1"/>
</dbReference>
<dbReference type="RefSeq" id="NP_001155215.1">
    <property type="nucleotide sequence ID" value="NM_001161743.1"/>
</dbReference>
<dbReference type="RefSeq" id="NP_001155216.1">
    <property type="nucleotide sequence ID" value="NM_001161744.1"/>
</dbReference>
<dbReference type="RefSeq" id="NP_001155217.1">
    <property type="nucleotide sequence ID" value="NM_001161745.1"/>
</dbReference>
<dbReference type="RefSeq" id="XP_006501104.1">
    <property type="nucleotide sequence ID" value="XM_006501041.1"/>
</dbReference>
<dbReference type="SMR" id="P26150"/>
<dbReference type="FunCoup" id="P26150">
    <property type="interactions" value="105"/>
</dbReference>
<dbReference type="STRING" id="10090.ENSMUSP00000102633"/>
<dbReference type="GlyGen" id="P26150">
    <property type="glycosylation" value="1 site, 1 O-linked glycan (1 site)"/>
</dbReference>
<dbReference type="iPTMnet" id="P26150"/>
<dbReference type="PhosphoSitePlus" id="P26150"/>
<dbReference type="SwissPalm" id="P26150"/>
<dbReference type="jPOST" id="P26150"/>
<dbReference type="PaxDb" id="10090-ENSMUSP00000102632"/>
<dbReference type="PeptideAtlas" id="P26150"/>
<dbReference type="ProteomicsDB" id="285534"/>
<dbReference type="DNASU" id="15494"/>
<dbReference type="Ensembl" id="ENSMUST00000090743.13">
    <property type="protein sequence ID" value="ENSMUSP00000088246.7"/>
    <property type="gene ID" value="ENSMUSG00000062410.15"/>
</dbReference>
<dbReference type="Ensembl" id="ENSMUST00000107019.8">
    <property type="protein sequence ID" value="ENSMUSP00000102633.2"/>
    <property type="gene ID" value="ENSMUSG00000062410.15"/>
</dbReference>
<dbReference type="GeneID" id="15494"/>
<dbReference type="KEGG" id="mmu:15494"/>
<dbReference type="UCSC" id="uc008qqf.2">
    <property type="organism name" value="mouse"/>
</dbReference>
<dbReference type="AGR" id="MGI:96235"/>
<dbReference type="CTD" id="15494"/>
<dbReference type="MGI" id="MGI:96235">
    <property type="gene designation" value="Hsd3b3"/>
</dbReference>
<dbReference type="VEuPathDB" id="HostDB:ENSMUSG00000062410"/>
<dbReference type="eggNOG" id="KOG1430">
    <property type="taxonomic scope" value="Eukaryota"/>
</dbReference>
<dbReference type="GeneTree" id="ENSGT00940000155444"/>
<dbReference type="HOGENOM" id="CLU_007383_6_3_1"/>
<dbReference type="InParanoid" id="P26150"/>
<dbReference type="OMA" id="YVENCTY"/>
<dbReference type="OrthoDB" id="1925334at2759"/>
<dbReference type="PhylomeDB" id="P26150"/>
<dbReference type="TreeFam" id="TF343138"/>
<dbReference type="Reactome" id="R-MMU-193048">
    <property type="pathway name" value="Androgen biosynthesis"/>
</dbReference>
<dbReference type="Reactome" id="R-MMU-193993">
    <property type="pathway name" value="Mineralocorticoid biosynthesis"/>
</dbReference>
<dbReference type="Reactome" id="R-MMU-194002">
    <property type="pathway name" value="Glucocorticoid biosynthesis"/>
</dbReference>
<dbReference type="SABIO-RK" id="P26150"/>
<dbReference type="UniPathway" id="UPA00062"/>
<dbReference type="BioGRID-ORCS" id="15494">
    <property type="hits" value="2 hits in 79 CRISPR screens"/>
</dbReference>
<dbReference type="ChiTaRS" id="Hsd3b3">
    <property type="organism name" value="mouse"/>
</dbReference>
<dbReference type="PRO" id="PR:P26150"/>
<dbReference type="Proteomes" id="UP000000589">
    <property type="component" value="Chromosome 3"/>
</dbReference>
<dbReference type="RNAct" id="P26150">
    <property type="molecule type" value="protein"/>
</dbReference>
<dbReference type="Bgee" id="ENSMUSG00000062410">
    <property type="expression patterns" value="Expressed in left lobe of liver and 27 other cell types or tissues"/>
</dbReference>
<dbReference type="ExpressionAtlas" id="P26150">
    <property type="expression patterns" value="baseline and differential"/>
</dbReference>
<dbReference type="GO" id="GO:0005789">
    <property type="term" value="C:endoplasmic reticulum membrane"/>
    <property type="evidence" value="ECO:0007669"/>
    <property type="project" value="UniProtKB-SubCell"/>
</dbReference>
<dbReference type="GO" id="GO:0005743">
    <property type="term" value="C:mitochondrial inner membrane"/>
    <property type="evidence" value="ECO:0007005"/>
    <property type="project" value="MGI"/>
</dbReference>
<dbReference type="GO" id="GO:0003854">
    <property type="term" value="F:3-beta-hydroxy-Delta5-steroid dehydrogenase (NAD+) activity"/>
    <property type="evidence" value="ECO:0007669"/>
    <property type="project" value="UniProtKB-EC"/>
</dbReference>
<dbReference type="GO" id="GO:0004769">
    <property type="term" value="F:steroid Delta-isomerase activity"/>
    <property type="evidence" value="ECO:0007669"/>
    <property type="project" value="UniProtKB-EC"/>
</dbReference>
<dbReference type="GO" id="GO:0006694">
    <property type="term" value="P:steroid biosynthetic process"/>
    <property type="evidence" value="ECO:0007669"/>
    <property type="project" value="UniProtKB-UniPathway"/>
</dbReference>
<dbReference type="FunFam" id="3.40.50.720:FF:000220">
    <property type="entry name" value="3 beta-hydroxysteroid dehydrogenase/Delta 5--&gt;4-isomerase type 1"/>
    <property type="match status" value="1"/>
</dbReference>
<dbReference type="Gene3D" id="3.40.50.720">
    <property type="entry name" value="NAD(P)-binding Rossmann-like Domain"/>
    <property type="match status" value="1"/>
</dbReference>
<dbReference type="InterPro" id="IPR002225">
    <property type="entry name" value="3Beta_OHSteriod_DH/Estase"/>
</dbReference>
<dbReference type="InterPro" id="IPR050177">
    <property type="entry name" value="Lipid_A_modif_metabolic_enz"/>
</dbReference>
<dbReference type="InterPro" id="IPR036291">
    <property type="entry name" value="NAD(P)-bd_dom_sf"/>
</dbReference>
<dbReference type="PANTHER" id="PTHR43245">
    <property type="entry name" value="BIFUNCTIONAL POLYMYXIN RESISTANCE PROTEIN ARNA"/>
    <property type="match status" value="1"/>
</dbReference>
<dbReference type="PANTHER" id="PTHR43245:SF51">
    <property type="entry name" value="SHORT CHAIN DEHYDROGENASE_REDUCTASE FAMILY 42E, MEMBER 2"/>
    <property type="match status" value="1"/>
</dbReference>
<dbReference type="Pfam" id="PF01073">
    <property type="entry name" value="3Beta_HSD"/>
    <property type="match status" value="1"/>
</dbReference>
<dbReference type="SUPFAM" id="SSF51735">
    <property type="entry name" value="NAD(P)-binding Rossmann-fold domains"/>
    <property type="match status" value="1"/>
</dbReference>
<gene>
    <name type="primary">Hsd3b3</name>
</gene>